<sequence>MNEEKAVVVFSGGQDSTTCLFWAKKQFGEVEAVTFDYGQRHRREIDVAQAIADELGVRHTVLDLSLLGQLAPNALTRRDIAIEQKKGELPTTFVDGRNLLFLSFAAVFAKQRGARHIVTGVCETDFSGYPDCRDVFIKSLNVTLNLAMDYEFVIHTPLMWLTKAETWKLADELGALEFIRTKTLTCYNGIIADGCGECPACALRKRGLDEYLREKAEVESR</sequence>
<gene>
    <name evidence="1" type="primary">queC</name>
    <name type="ordered locus">GK0975</name>
</gene>
<proteinExistence type="inferred from homology"/>
<dbReference type="EC" id="6.3.4.20" evidence="1"/>
<dbReference type="EMBL" id="BA000043">
    <property type="protein sequence ID" value="BAD75260.1"/>
    <property type="status" value="ALT_INIT"/>
    <property type="molecule type" value="Genomic_DNA"/>
</dbReference>
<dbReference type="SMR" id="Q5L1C0"/>
<dbReference type="STRING" id="235909.GK0975"/>
<dbReference type="KEGG" id="gka:GK0975"/>
<dbReference type="eggNOG" id="COG0603">
    <property type="taxonomic scope" value="Bacteria"/>
</dbReference>
<dbReference type="HOGENOM" id="CLU_081854_0_0_9"/>
<dbReference type="UniPathway" id="UPA00391"/>
<dbReference type="Proteomes" id="UP000001172">
    <property type="component" value="Chromosome"/>
</dbReference>
<dbReference type="GO" id="GO:0005524">
    <property type="term" value="F:ATP binding"/>
    <property type="evidence" value="ECO:0007669"/>
    <property type="project" value="UniProtKB-UniRule"/>
</dbReference>
<dbReference type="GO" id="GO:0016879">
    <property type="term" value="F:ligase activity, forming carbon-nitrogen bonds"/>
    <property type="evidence" value="ECO:0007669"/>
    <property type="project" value="UniProtKB-UniRule"/>
</dbReference>
<dbReference type="GO" id="GO:0008270">
    <property type="term" value="F:zinc ion binding"/>
    <property type="evidence" value="ECO:0007669"/>
    <property type="project" value="UniProtKB-UniRule"/>
</dbReference>
<dbReference type="GO" id="GO:0008616">
    <property type="term" value="P:queuosine biosynthetic process"/>
    <property type="evidence" value="ECO:0007669"/>
    <property type="project" value="UniProtKB-UniRule"/>
</dbReference>
<dbReference type="CDD" id="cd01995">
    <property type="entry name" value="QueC-like"/>
    <property type="match status" value="1"/>
</dbReference>
<dbReference type="FunFam" id="3.40.50.620:FF:000017">
    <property type="entry name" value="7-cyano-7-deazaguanine synthase"/>
    <property type="match status" value="1"/>
</dbReference>
<dbReference type="Gene3D" id="3.40.50.620">
    <property type="entry name" value="HUPs"/>
    <property type="match status" value="1"/>
</dbReference>
<dbReference type="HAMAP" id="MF_01633">
    <property type="entry name" value="QueC"/>
    <property type="match status" value="1"/>
</dbReference>
<dbReference type="InterPro" id="IPR018317">
    <property type="entry name" value="QueC"/>
</dbReference>
<dbReference type="InterPro" id="IPR014729">
    <property type="entry name" value="Rossmann-like_a/b/a_fold"/>
</dbReference>
<dbReference type="NCBIfam" id="TIGR00364">
    <property type="entry name" value="7-cyano-7-deazaguanine synthase QueC"/>
    <property type="match status" value="1"/>
</dbReference>
<dbReference type="PANTHER" id="PTHR42914">
    <property type="entry name" value="7-CYANO-7-DEAZAGUANINE SYNTHASE"/>
    <property type="match status" value="1"/>
</dbReference>
<dbReference type="PANTHER" id="PTHR42914:SF1">
    <property type="entry name" value="7-CYANO-7-DEAZAGUANINE SYNTHASE"/>
    <property type="match status" value="1"/>
</dbReference>
<dbReference type="Pfam" id="PF06508">
    <property type="entry name" value="QueC"/>
    <property type="match status" value="1"/>
</dbReference>
<dbReference type="PIRSF" id="PIRSF006293">
    <property type="entry name" value="ExsB"/>
    <property type="match status" value="1"/>
</dbReference>
<dbReference type="SUPFAM" id="SSF52402">
    <property type="entry name" value="Adenine nucleotide alpha hydrolases-like"/>
    <property type="match status" value="1"/>
</dbReference>
<protein>
    <recommendedName>
        <fullName evidence="1">7-cyano-7-deazaguanine synthase</fullName>
        <ecNumber evidence="1">6.3.4.20</ecNumber>
    </recommendedName>
    <alternativeName>
        <fullName evidence="1">7-cyano-7-carbaguanine synthase</fullName>
    </alternativeName>
    <alternativeName>
        <fullName evidence="1">PreQ(0) synthase</fullName>
    </alternativeName>
    <alternativeName>
        <fullName evidence="1">Queuosine biosynthesis protein QueC</fullName>
    </alternativeName>
</protein>
<accession>Q5L1C0</accession>
<keyword id="KW-0067">ATP-binding</keyword>
<keyword id="KW-0436">Ligase</keyword>
<keyword id="KW-0479">Metal-binding</keyword>
<keyword id="KW-0547">Nucleotide-binding</keyword>
<keyword id="KW-0671">Queuosine biosynthesis</keyword>
<keyword id="KW-1185">Reference proteome</keyword>
<keyword id="KW-0862">Zinc</keyword>
<comment type="function">
    <text evidence="1">Catalyzes the ATP-dependent conversion of 7-carboxy-7-deazaguanine (CDG) to 7-cyano-7-deazaguanine (preQ(0)).</text>
</comment>
<comment type="catalytic activity">
    <reaction evidence="1">
        <text>7-carboxy-7-deazaguanine + NH4(+) + ATP = 7-cyano-7-deazaguanine + ADP + phosphate + H2O + H(+)</text>
        <dbReference type="Rhea" id="RHEA:27982"/>
        <dbReference type="ChEBI" id="CHEBI:15377"/>
        <dbReference type="ChEBI" id="CHEBI:15378"/>
        <dbReference type="ChEBI" id="CHEBI:28938"/>
        <dbReference type="ChEBI" id="CHEBI:30616"/>
        <dbReference type="ChEBI" id="CHEBI:43474"/>
        <dbReference type="ChEBI" id="CHEBI:45075"/>
        <dbReference type="ChEBI" id="CHEBI:61036"/>
        <dbReference type="ChEBI" id="CHEBI:456216"/>
        <dbReference type="EC" id="6.3.4.20"/>
    </reaction>
</comment>
<comment type="cofactor">
    <cofactor evidence="1">
        <name>Zn(2+)</name>
        <dbReference type="ChEBI" id="CHEBI:29105"/>
    </cofactor>
    <text evidence="1">Binds 1 zinc ion per subunit.</text>
</comment>
<comment type="pathway">
    <text evidence="1">Purine metabolism; 7-cyano-7-deazaguanine biosynthesis.</text>
</comment>
<comment type="subunit">
    <text evidence="1">Homodimer.</text>
</comment>
<comment type="similarity">
    <text evidence="1">Belongs to the QueC family.</text>
</comment>
<comment type="sequence caution" evidence="2">
    <conflict type="erroneous initiation">
        <sequence resource="EMBL-CDS" id="BAD75260"/>
    </conflict>
</comment>
<name>QUEC_GEOKA</name>
<reference key="1">
    <citation type="journal article" date="2004" name="Nucleic Acids Res.">
        <title>Thermoadaptation trait revealed by the genome sequence of thermophilic Geobacillus kaustophilus.</title>
        <authorList>
            <person name="Takami H."/>
            <person name="Takaki Y."/>
            <person name="Chee G.-J."/>
            <person name="Nishi S."/>
            <person name="Shimamura S."/>
            <person name="Suzuki H."/>
            <person name="Matsui S."/>
            <person name="Uchiyama I."/>
        </authorList>
    </citation>
    <scope>NUCLEOTIDE SEQUENCE [LARGE SCALE GENOMIC DNA]</scope>
    <source>
        <strain>HTA426</strain>
    </source>
</reference>
<organism>
    <name type="scientific">Geobacillus kaustophilus (strain HTA426)</name>
    <dbReference type="NCBI Taxonomy" id="235909"/>
    <lineage>
        <taxon>Bacteria</taxon>
        <taxon>Bacillati</taxon>
        <taxon>Bacillota</taxon>
        <taxon>Bacilli</taxon>
        <taxon>Bacillales</taxon>
        <taxon>Anoxybacillaceae</taxon>
        <taxon>Geobacillus</taxon>
        <taxon>Geobacillus thermoleovorans group</taxon>
    </lineage>
</organism>
<evidence type="ECO:0000255" key="1">
    <source>
        <dbReference type="HAMAP-Rule" id="MF_01633"/>
    </source>
</evidence>
<evidence type="ECO:0000305" key="2"/>
<feature type="chain" id="PRO_0000246844" description="7-cyano-7-deazaguanine synthase">
    <location>
        <begin position="1"/>
        <end position="221"/>
    </location>
</feature>
<feature type="binding site" evidence="1">
    <location>
        <begin position="10"/>
        <end position="20"/>
    </location>
    <ligand>
        <name>ATP</name>
        <dbReference type="ChEBI" id="CHEBI:30616"/>
    </ligand>
</feature>
<feature type="binding site" evidence="1">
    <location>
        <position position="186"/>
    </location>
    <ligand>
        <name>Zn(2+)</name>
        <dbReference type="ChEBI" id="CHEBI:29105"/>
    </ligand>
</feature>
<feature type="binding site" evidence="1">
    <location>
        <position position="195"/>
    </location>
    <ligand>
        <name>Zn(2+)</name>
        <dbReference type="ChEBI" id="CHEBI:29105"/>
    </ligand>
</feature>
<feature type="binding site" evidence="1">
    <location>
        <position position="198"/>
    </location>
    <ligand>
        <name>Zn(2+)</name>
        <dbReference type="ChEBI" id="CHEBI:29105"/>
    </ligand>
</feature>
<feature type="binding site" evidence="1">
    <location>
        <position position="201"/>
    </location>
    <ligand>
        <name>Zn(2+)</name>
        <dbReference type="ChEBI" id="CHEBI:29105"/>
    </ligand>
</feature>